<gene>
    <name evidence="1" type="primary">pyrF</name>
    <name type="ordered locus">Z2525</name>
    <name type="ordered locus">ECs1854</name>
</gene>
<name>PYRF_ECO57</name>
<comment type="function">
    <text evidence="1">Catalyzes the decarboxylation of orotidine 5'-monophosphate (OMP) to uridine 5'-monophosphate (UMP).</text>
</comment>
<comment type="catalytic activity">
    <reaction evidence="1">
        <text>orotidine 5'-phosphate + H(+) = UMP + CO2</text>
        <dbReference type="Rhea" id="RHEA:11596"/>
        <dbReference type="ChEBI" id="CHEBI:15378"/>
        <dbReference type="ChEBI" id="CHEBI:16526"/>
        <dbReference type="ChEBI" id="CHEBI:57538"/>
        <dbReference type="ChEBI" id="CHEBI:57865"/>
        <dbReference type="EC" id="4.1.1.23"/>
    </reaction>
</comment>
<comment type="pathway">
    <text evidence="1">Pyrimidine metabolism; UMP biosynthesis via de novo pathway; UMP from orotate: step 2/2.</text>
</comment>
<comment type="subunit">
    <text evidence="1">Homodimer.</text>
</comment>
<comment type="similarity">
    <text evidence="1">Belongs to the OMP decarboxylase family. Type 1 subfamily.</text>
</comment>
<comment type="sequence caution" evidence="2">
    <conflict type="erroneous initiation">
        <sequence resource="EMBL-CDS" id="BAB35277"/>
    </conflict>
    <text>Extended N-terminus.</text>
</comment>
<sequence>MTLTASSSSRAVTNSPVVVALDYHNRDAALAFVDKIDPRDCRLKVGKEMFTLFGPQFVRELQQRGFDIFLDLKFHDIPNTAAHAVAAAADLGVWMVNVHASGGARMMTAAREALVPFGKDAPLLIAVTVLTSMEASDLADLGVTLSPADYAERLAALTQKCGLDGVVCSAQEAVRFKQVFGQEFKLVTPGIRPQGSEAGDQRRIMTPEQALAAGVDYMVIGRPVTQSVDPAQTLKAINASLQRSA</sequence>
<accession>P58640</accession>
<reference key="1">
    <citation type="journal article" date="2001" name="Nature">
        <title>Genome sequence of enterohaemorrhagic Escherichia coli O157:H7.</title>
        <authorList>
            <person name="Perna N.T."/>
            <person name="Plunkett G. III"/>
            <person name="Burland V."/>
            <person name="Mau B."/>
            <person name="Glasner J.D."/>
            <person name="Rose D.J."/>
            <person name="Mayhew G.F."/>
            <person name="Evans P.S."/>
            <person name="Gregor J."/>
            <person name="Kirkpatrick H.A."/>
            <person name="Posfai G."/>
            <person name="Hackett J."/>
            <person name="Klink S."/>
            <person name="Boutin A."/>
            <person name="Shao Y."/>
            <person name="Miller L."/>
            <person name="Grotbeck E.J."/>
            <person name="Davis N.W."/>
            <person name="Lim A."/>
            <person name="Dimalanta E.T."/>
            <person name="Potamousis K."/>
            <person name="Apodaca J."/>
            <person name="Anantharaman T.S."/>
            <person name="Lin J."/>
            <person name="Yen G."/>
            <person name="Schwartz D.C."/>
            <person name="Welch R.A."/>
            <person name="Blattner F.R."/>
        </authorList>
    </citation>
    <scope>NUCLEOTIDE SEQUENCE [LARGE SCALE GENOMIC DNA]</scope>
    <source>
        <strain>O157:H7 / EDL933 / ATCC 700927 / EHEC</strain>
    </source>
</reference>
<reference key="2">
    <citation type="journal article" date="2001" name="DNA Res.">
        <title>Complete genome sequence of enterohemorrhagic Escherichia coli O157:H7 and genomic comparison with a laboratory strain K-12.</title>
        <authorList>
            <person name="Hayashi T."/>
            <person name="Makino K."/>
            <person name="Ohnishi M."/>
            <person name="Kurokawa K."/>
            <person name="Ishii K."/>
            <person name="Yokoyama K."/>
            <person name="Han C.-G."/>
            <person name="Ohtsubo E."/>
            <person name="Nakayama K."/>
            <person name="Murata T."/>
            <person name="Tanaka M."/>
            <person name="Tobe T."/>
            <person name="Iida T."/>
            <person name="Takami H."/>
            <person name="Honda T."/>
            <person name="Sasakawa C."/>
            <person name="Ogasawara N."/>
            <person name="Yasunaga T."/>
            <person name="Kuhara S."/>
            <person name="Shiba T."/>
            <person name="Hattori M."/>
            <person name="Shinagawa H."/>
        </authorList>
    </citation>
    <scope>NUCLEOTIDE SEQUENCE [LARGE SCALE GENOMIC DNA]</scope>
    <source>
        <strain>O157:H7 / Sakai / RIMD 0509952 / EHEC</strain>
    </source>
</reference>
<proteinExistence type="inferred from homology"/>
<protein>
    <recommendedName>
        <fullName evidence="1">Orotidine 5'-phosphate decarboxylase</fullName>
        <ecNumber evidence="1">4.1.1.23</ecNumber>
    </recommendedName>
    <alternativeName>
        <fullName evidence="1">OMP decarboxylase</fullName>
        <shortName evidence="1">OMPDCase</shortName>
        <shortName evidence="1">OMPdecase</shortName>
    </alternativeName>
</protein>
<keyword id="KW-0210">Decarboxylase</keyword>
<keyword id="KW-0456">Lyase</keyword>
<keyword id="KW-0665">Pyrimidine biosynthesis</keyword>
<keyword id="KW-1185">Reference proteome</keyword>
<evidence type="ECO:0000255" key="1">
    <source>
        <dbReference type="HAMAP-Rule" id="MF_01200"/>
    </source>
</evidence>
<evidence type="ECO:0000305" key="2"/>
<organism>
    <name type="scientific">Escherichia coli O157:H7</name>
    <dbReference type="NCBI Taxonomy" id="83334"/>
    <lineage>
        <taxon>Bacteria</taxon>
        <taxon>Pseudomonadati</taxon>
        <taxon>Pseudomonadota</taxon>
        <taxon>Gammaproteobacteria</taxon>
        <taxon>Enterobacterales</taxon>
        <taxon>Enterobacteriaceae</taxon>
        <taxon>Escherichia</taxon>
    </lineage>
</organism>
<dbReference type="EC" id="4.1.1.23" evidence="1"/>
<dbReference type="EMBL" id="AE005174">
    <property type="protein sequence ID" value="AAG56532.1"/>
    <property type="molecule type" value="Genomic_DNA"/>
</dbReference>
<dbReference type="EMBL" id="BA000007">
    <property type="protein sequence ID" value="BAB35277.2"/>
    <property type="status" value="ALT_INIT"/>
    <property type="molecule type" value="Genomic_DNA"/>
</dbReference>
<dbReference type="PIR" id="F90860">
    <property type="entry name" value="F90860"/>
</dbReference>
<dbReference type="PIR" id="H85758">
    <property type="entry name" value="H85758"/>
</dbReference>
<dbReference type="RefSeq" id="NP_309881.1">
    <property type="nucleotide sequence ID" value="NC_002695.1"/>
</dbReference>
<dbReference type="RefSeq" id="WP_000176265.1">
    <property type="nucleotide sequence ID" value="NZ_VOAI01000015.1"/>
</dbReference>
<dbReference type="SMR" id="P58640"/>
<dbReference type="STRING" id="155864.Z2525"/>
<dbReference type="GeneID" id="912806"/>
<dbReference type="KEGG" id="ece:Z2525"/>
<dbReference type="KEGG" id="ecs:ECs_1854"/>
<dbReference type="PATRIC" id="fig|386585.9.peg.1954"/>
<dbReference type="eggNOG" id="COG0284">
    <property type="taxonomic scope" value="Bacteria"/>
</dbReference>
<dbReference type="HOGENOM" id="CLU_067069_0_0_6"/>
<dbReference type="OMA" id="FWKVGLE"/>
<dbReference type="UniPathway" id="UPA00070">
    <property type="reaction ID" value="UER00120"/>
</dbReference>
<dbReference type="Proteomes" id="UP000000558">
    <property type="component" value="Chromosome"/>
</dbReference>
<dbReference type="Proteomes" id="UP000002519">
    <property type="component" value="Chromosome"/>
</dbReference>
<dbReference type="GO" id="GO:0005829">
    <property type="term" value="C:cytosol"/>
    <property type="evidence" value="ECO:0007669"/>
    <property type="project" value="TreeGrafter"/>
</dbReference>
<dbReference type="GO" id="GO:0004590">
    <property type="term" value="F:orotidine-5'-phosphate decarboxylase activity"/>
    <property type="evidence" value="ECO:0007669"/>
    <property type="project" value="UniProtKB-UniRule"/>
</dbReference>
<dbReference type="GO" id="GO:0006207">
    <property type="term" value="P:'de novo' pyrimidine nucleobase biosynthetic process"/>
    <property type="evidence" value="ECO:0007669"/>
    <property type="project" value="InterPro"/>
</dbReference>
<dbReference type="GO" id="GO:0044205">
    <property type="term" value="P:'de novo' UMP biosynthetic process"/>
    <property type="evidence" value="ECO:0007669"/>
    <property type="project" value="UniProtKB-UniRule"/>
</dbReference>
<dbReference type="CDD" id="cd04725">
    <property type="entry name" value="OMP_decarboxylase_like"/>
    <property type="match status" value="1"/>
</dbReference>
<dbReference type="FunFam" id="3.20.20.70:FF:000015">
    <property type="entry name" value="Orotidine 5'-phosphate decarboxylase"/>
    <property type="match status" value="1"/>
</dbReference>
<dbReference type="Gene3D" id="3.20.20.70">
    <property type="entry name" value="Aldolase class I"/>
    <property type="match status" value="1"/>
</dbReference>
<dbReference type="HAMAP" id="MF_01200_B">
    <property type="entry name" value="OMPdecase_type1_B"/>
    <property type="match status" value="1"/>
</dbReference>
<dbReference type="InterPro" id="IPR013785">
    <property type="entry name" value="Aldolase_TIM"/>
</dbReference>
<dbReference type="InterPro" id="IPR014732">
    <property type="entry name" value="OMPdecase"/>
</dbReference>
<dbReference type="InterPro" id="IPR018089">
    <property type="entry name" value="OMPdecase_AS"/>
</dbReference>
<dbReference type="InterPro" id="IPR047596">
    <property type="entry name" value="OMPdecase_bac"/>
</dbReference>
<dbReference type="InterPro" id="IPR001754">
    <property type="entry name" value="OMPdeCOase_dom"/>
</dbReference>
<dbReference type="InterPro" id="IPR011060">
    <property type="entry name" value="RibuloseP-bd_barrel"/>
</dbReference>
<dbReference type="NCBIfam" id="NF001273">
    <property type="entry name" value="PRK00230.1"/>
    <property type="match status" value="1"/>
</dbReference>
<dbReference type="NCBIfam" id="TIGR01740">
    <property type="entry name" value="pyrF"/>
    <property type="match status" value="1"/>
</dbReference>
<dbReference type="PANTHER" id="PTHR32119">
    <property type="entry name" value="OROTIDINE 5'-PHOSPHATE DECARBOXYLASE"/>
    <property type="match status" value="1"/>
</dbReference>
<dbReference type="PANTHER" id="PTHR32119:SF2">
    <property type="entry name" value="OROTIDINE 5'-PHOSPHATE DECARBOXYLASE"/>
    <property type="match status" value="1"/>
</dbReference>
<dbReference type="Pfam" id="PF00215">
    <property type="entry name" value="OMPdecase"/>
    <property type="match status" value="1"/>
</dbReference>
<dbReference type="SMART" id="SM00934">
    <property type="entry name" value="OMPdecase"/>
    <property type="match status" value="1"/>
</dbReference>
<dbReference type="SUPFAM" id="SSF51366">
    <property type="entry name" value="Ribulose-phoshate binding barrel"/>
    <property type="match status" value="1"/>
</dbReference>
<dbReference type="PROSITE" id="PS00156">
    <property type="entry name" value="OMPDECASE"/>
    <property type="match status" value="1"/>
</dbReference>
<feature type="chain" id="PRO_0000134541" description="Orotidine 5'-phosphate decarboxylase">
    <location>
        <begin position="1"/>
        <end position="245"/>
    </location>
</feature>
<feature type="active site" description="Proton donor" evidence="1">
    <location>
        <position position="73"/>
    </location>
</feature>
<feature type="binding site" evidence="1">
    <location>
        <position position="22"/>
    </location>
    <ligand>
        <name>substrate</name>
    </ligand>
</feature>
<feature type="binding site" evidence="1">
    <location>
        <position position="44"/>
    </location>
    <ligand>
        <name>substrate</name>
    </ligand>
</feature>
<feature type="binding site" evidence="1">
    <location>
        <begin position="71"/>
        <end position="80"/>
    </location>
    <ligand>
        <name>substrate</name>
    </ligand>
</feature>
<feature type="binding site" evidence="1">
    <location>
        <position position="131"/>
    </location>
    <ligand>
        <name>substrate</name>
    </ligand>
</feature>
<feature type="binding site" evidence="1">
    <location>
        <position position="192"/>
    </location>
    <ligand>
        <name>substrate</name>
    </ligand>
</feature>
<feature type="binding site" evidence="1">
    <location>
        <position position="201"/>
    </location>
    <ligand>
        <name>substrate</name>
    </ligand>
</feature>
<feature type="binding site" evidence="1">
    <location>
        <position position="221"/>
    </location>
    <ligand>
        <name>substrate</name>
    </ligand>
</feature>
<feature type="binding site" evidence="1">
    <location>
        <position position="222"/>
    </location>
    <ligand>
        <name>substrate</name>
    </ligand>
</feature>